<comment type="function">
    <text evidence="2 3">Growth factor that controls proliferation and cellular differentiation in the retina and bone formation. Plays a key role in regulating apoptosis during retinal development. Establishes dorsal-ventral positional information in the retina and controls the formation of the retinotectal map. Required for normal formation of bones and joints in the limbs, skull, digits and axial skeleton. Plays a key role in establishing boundaries between skeletal elements during development. Regulation of GDF6 expression seems to be a mechanism for evolving species-specific changes in skeletal structures. Seems to positively regulate differentiation of chondrogenic tissue through the growth factor receptors subunits BMPR1A, BMPR1B, BMPR2 and ACVR2A, leading to the activation of SMAD1-SMAD5-SMAD8 complex. The regulation of chondrogenic differentiation is inhibited by NOG. Also involved in the induction of adipogenesis from mesenchymal stem cells. This mechanism acts through the growth factor receptors subunits BMPR1A, BMPR2 and ACVR2A and the activation of SMAD1-SMAD5-SMAD8 complex and MAPK14/p38.</text>
</comment>
<comment type="subunit">
    <text evidence="1">Homodimer; disulfide-linked.</text>
</comment>
<comment type="subcellular location">
    <subcellularLocation>
        <location evidence="3">Secreted</location>
    </subcellularLocation>
</comment>
<comment type="similarity">
    <text evidence="6">Belongs to the TGF-beta family.</text>
</comment>
<gene>
    <name type="primary">Gdf6</name>
    <name type="synonym">Bmp13</name>
    <name type="synonym">Gdf16</name>
</gene>
<reference key="1">
    <citation type="submission" date="2003-01" db="EMBL/GenBank/DDBJ databases">
        <title>Cloning of human Gdf16 and associated analysis.</title>
        <authorList>
            <person name="Guo J.H."/>
        </authorList>
    </citation>
    <scope>NUCLEOTIDE SEQUENCE [MRNA]</scope>
    <source>
        <strain>Sprague-Dawley</strain>
        <tissue>Brain</tissue>
    </source>
</reference>
<reference key="2">
    <citation type="journal article" date="1997" name="J. Hard Tissue Biol.">
        <title>Molecular cloning of PCR amplified BMP-related genes (GDF-5, 6 and 7) from rat tooth cells using modified pBluescript SK+ Vector.</title>
        <authorList>
            <person name="Oida S."/>
            <person name="Morotome Y."/>
            <person name="Nakamura T."/>
            <person name="Terashima T."/>
        </authorList>
    </citation>
    <scope>NUCLEOTIDE SEQUENCE [MRNA] OF 372-438</scope>
    <source>
        <tissue>Tooth</tissue>
    </source>
</reference>
<organism>
    <name type="scientific">Rattus norvegicus</name>
    <name type="common">Rat</name>
    <dbReference type="NCBI Taxonomy" id="10116"/>
    <lineage>
        <taxon>Eukaryota</taxon>
        <taxon>Metazoa</taxon>
        <taxon>Chordata</taxon>
        <taxon>Craniata</taxon>
        <taxon>Vertebrata</taxon>
        <taxon>Euteleostomi</taxon>
        <taxon>Mammalia</taxon>
        <taxon>Eutheria</taxon>
        <taxon>Euarchontoglires</taxon>
        <taxon>Glires</taxon>
        <taxon>Rodentia</taxon>
        <taxon>Myomorpha</taxon>
        <taxon>Muroidea</taxon>
        <taxon>Muridae</taxon>
        <taxon>Murinae</taxon>
        <taxon>Rattus</taxon>
    </lineage>
</organism>
<sequence>MDTPRVLLWAIFLISFLWDLPGFQQASISSSSSTELDSTKDVENRKGGKMQRTPQESAEGRTPKEHRPRPNELRRRLPGQSLGQEPPGRGPRVVPHEYMLSIYRTYSIAEKLGINASFFQSSKSANTITSFVDRGLDDLSHTPLRRQKYLFDVSTLSDKEELVGAELRLYRQAPPTPWGPQTRPLHLQLFPCLSPLLLDSRTLDPQGPTEAGWEVFDVWQVLRPQPWKQLCLELRAVWGELDARDSGARPRGPQQSPPLDLRSLGFGRRVRPPQERALLVVFTRSQRKNLFTEMHEQLGSAEAAGAEGSWPAPSGAPDAGSWLPSPGRRRRRTALSSRHGKRHGKKSRLRCSRKPLHVNFKELGWDDWIIAPLEYEAYHCEGVCDFPLRSHLEPTNHAIIQTLMNSMDPGSTPPSCCVPTKLTPISILYIDAGNNVVYKQYEDMVVESCGCR</sequence>
<dbReference type="EMBL" id="AJ537426">
    <property type="protein sequence ID" value="CAD60936.2"/>
    <property type="molecule type" value="mRNA"/>
</dbReference>
<dbReference type="EMBL" id="AB087405">
    <property type="protein sequence ID" value="BAC02714.1"/>
    <property type="molecule type" value="mRNA"/>
</dbReference>
<dbReference type="RefSeq" id="NP_001013056.1">
    <property type="nucleotide sequence ID" value="NM_001013038.1"/>
</dbReference>
<dbReference type="SMR" id="Q6HA10"/>
<dbReference type="FunCoup" id="Q6HA10">
    <property type="interactions" value="650"/>
</dbReference>
<dbReference type="STRING" id="10116.ENSRNOP00000010266"/>
<dbReference type="GlyCosmos" id="Q6HA10">
    <property type="glycosylation" value="1 site, No reported glycans"/>
</dbReference>
<dbReference type="GlyGen" id="Q6HA10">
    <property type="glycosylation" value="4 sites"/>
</dbReference>
<dbReference type="PhosphoSitePlus" id="Q6HA10"/>
<dbReference type="PaxDb" id="10116-ENSRNOP00000010266"/>
<dbReference type="Ensembl" id="ENSRNOT00000101359.1">
    <property type="protein sequence ID" value="ENSRNOP00000082414.1"/>
    <property type="gene ID" value="ENSRNOG00000067800.1"/>
</dbReference>
<dbReference type="GeneID" id="252834"/>
<dbReference type="KEGG" id="rno:252834"/>
<dbReference type="UCSC" id="RGD:620104">
    <property type="organism name" value="rat"/>
</dbReference>
<dbReference type="AGR" id="RGD:620104"/>
<dbReference type="CTD" id="392255"/>
<dbReference type="RGD" id="620104">
    <property type="gene designation" value="Gdf6"/>
</dbReference>
<dbReference type="eggNOG" id="KOG3900">
    <property type="taxonomic scope" value="Eukaryota"/>
</dbReference>
<dbReference type="GeneTree" id="ENSGT00940000162274"/>
<dbReference type="HOGENOM" id="CLU_020515_0_0_1"/>
<dbReference type="InParanoid" id="Q6HA10"/>
<dbReference type="OMA" id="KKSKYRC"/>
<dbReference type="OrthoDB" id="76542at9989"/>
<dbReference type="PhylomeDB" id="Q6HA10"/>
<dbReference type="TreeFam" id="TF316134"/>
<dbReference type="PRO" id="PR:Q6HA10"/>
<dbReference type="Proteomes" id="UP000002494">
    <property type="component" value="Chromosome 5"/>
</dbReference>
<dbReference type="Bgee" id="ENSRNOG00000007810">
    <property type="expression patterns" value="Expressed in esophagus and 2 other cell types or tissues"/>
</dbReference>
<dbReference type="GO" id="GO:0005615">
    <property type="term" value="C:extracellular space"/>
    <property type="evidence" value="ECO:0000318"/>
    <property type="project" value="GO_Central"/>
</dbReference>
<dbReference type="GO" id="GO:0005125">
    <property type="term" value="F:cytokine activity"/>
    <property type="evidence" value="ECO:0000318"/>
    <property type="project" value="GO_Central"/>
</dbReference>
<dbReference type="GO" id="GO:0008083">
    <property type="term" value="F:growth factor activity"/>
    <property type="evidence" value="ECO:0007669"/>
    <property type="project" value="UniProtKB-KW"/>
</dbReference>
<dbReference type="GO" id="GO:0042802">
    <property type="term" value="F:identical protein binding"/>
    <property type="evidence" value="ECO:0000266"/>
    <property type="project" value="RGD"/>
</dbReference>
<dbReference type="GO" id="GO:0032924">
    <property type="term" value="P:activin receptor signaling pathway"/>
    <property type="evidence" value="ECO:0000266"/>
    <property type="project" value="RGD"/>
</dbReference>
<dbReference type="GO" id="GO:0006915">
    <property type="term" value="P:apoptotic process"/>
    <property type="evidence" value="ECO:0000250"/>
    <property type="project" value="UniProtKB"/>
</dbReference>
<dbReference type="GO" id="GO:0030509">
    <property type="term" value="P:BMP signaling pathway"/>
    <property type="evidence" value="ECO:0000250"/>
    <property type="project" value="UniProtKB"/>
</dbReference>
<dbReference type="GO" id="GO:0035788">
    <property type="term" value="P:cell migration involved in metanephros development"/>
    <property type="evidence" value="ECO:0000266"/>
    <property type="project" value="RGD"/>
</dbReference>
<dbReference type="GO" id="GO:0010631">
    <property type="term" value="P:epithelial cell migration"/>
    <property type="evidence" value="ECO:0000266"/>
    <property type="project" value="RGD"/>
</dbReference>
<dbReference type="GO" id="GO:0045444">
    <property type="term" value="P:fat cell differentiation"/>
    <property type="evidence" value="ECO:0000250"/>
    <property type="project" value="UniProtKB"/>
</dbReference>
<dbReference type="GO" id="GO:0001656">
    <property type="term" value="P:metanephros development"/>
    <property type="evidence" value="ECO:0000266"/>
    <property type="project" value="RGD"/>
</dbReference>
<dbReference type="GO" id="GO:0032332">
    <property type="term" value="P:positive regulation of chondrocyte differentiation"/>
    <property type="evidence" value="ECO:0000250"/>
    <property type="project" value="UniProtKB"/>
</dbReference>
<dbReference type="GO" id="GO:0045893">
    <property type="term" value="P:positive regulation of DNA-templated transcription"/>
    <property type="evidence" value="ECO:0000266"/>
    <property type="project" value="RGD"/>
</dbReference>
<dbReference type="GO" id="GO:0045666">
    <property type="term" value="P:positive regulation of neuron differentiation"/>
    <property type="evidence" value="ECO:0000266"/>
    <property type="project" value="RGD"/>
</dbReference>
<dbReference type="GO" id="GO:1900745">
    <property type="term" value="P:positive regulation of p38MAPK cascade"/>
    <property type="evidence" value="ECO:0000250"/>
    <property type="project" value="UniProtKB"/>
</dbReference>
<dbReference type="GO" id="GO:0060391">
    <property type="term" value="P:positive regulation of SMAD protein signal transduction"/>
    <property type="evidence" value="ECO:0000250"/>
    <property type="project" value="UniProtKB"/>
</dbReference>
<dbReference type="GO" id="GO:1990009">
    <property type="term" value="P:retinal cell apoptotic process"/>
    <property type="evidence" value="ECO:0000250"/>
    <property type="project" value="UniProtKB"/>
</dbReference>
<dbReference type="CDD" id="cd13766">
    <property type="entry name" value="TGF_beta_GDF5_6_7"/>
    <property type="match status" value="1"/>
</dbReference>
<dbReference type="FunFam" id="2.10.90.10:FF:000001">
    <property type="entry name" value="Bone morphogenetic protein 4"/>
    <property type="match status" value="1"/>
</dbReference>
<dbReference type="FunFam" id="2.60.120.970:FF:000026">
    <property type="entry name" value="Growth differentiation factor 6"/>
    <property type="match status" value="1"/>
</dbReference>
<dbReference type="Gene3D" id="2.60.120.970">
    <property type="match status" value="1"/>
</dbReference>
<dbReference type="Gene3D" id="2.10.90.10">
    <property type="entry name" value="Cystine-knot cytokines"/>
    <property type="match status" value="1"/>
</dbReference>
<dbReference type="InterPro" id="IPR029034">
    <property type="entry name" value="Cystine-knot_cytokine"/>
</dbReference>
<dbReference type="InterPro" id="IPR001839">
    <property type="entry name" value="TGF-b_C"/>
</dbReference>
<dbReference type="InterPro" id="IPR001111">
    <property type="entry name" value="TGF-b_propeptide"/>
</dbReference>
<dbReference type="InterPro" id="IPR015615">
    <property type="entry name" value="TGF-beta-rel"/>
</dbReference>
<dbReference type="InterPro" id="IPR017948">
    <property type="entry name" value="TGFb_CS"/>
</dbReference>
<dbReference type="PANTHER" id="PTHR11848:SF43">
    <property type="entry name" value="GROWTH_DIFFERENTIATION FACTOR 6"/>
    <property type="match status" value="1"/>
</dbReference>
<dbReference type="PANTHER" id="PTHR11848">
    <property type="entry name" value="TGF-BETA FAMILY"/>
    <property type="match status" value="1"/>
</dbReference>
<dbReference type="Pfam" id="PF00019">
    <property type="entry name" value="TGF_beta"/>
    <property type="match status" value="1"/>
</dbReference>
<dbReference type="Pfam" id="PF00688">
    <property type="entry name" value="TGFb_propeptide"/>
    <property type="match status" value="1"/>
</dbReference>
<dbReference type="PRINTS" id="PR00669">
    <property type="entry name" value="INHIBINA"/>
</dbReference>
<dbReference type="SMART" id="SM00204">
    <property type="entry name" value="TGFB"/>
    <property type="match status" value="1"/>
</dbReference>
<dbReference type="SUPFAM" id="SSF57501">
    <property type="entry name" value="Cystine-knot cytokines"/>
    <property type="match status" value="1"/>
</dbReference>
<dbReference type="PROSITE" id="PS00250">
    <property type="entry name" value="TGF_BETA_1"/>
    <property type="match status" value="1"/>
</dbReference>
<dbReference type="PROSITE" id="PS51362">
    <property type="entry name" value="TGF_BETA_2"/>
    <property type="match status" value="1"/>
</dbReference>
<evidence type="ECO:0000250" key="1">
    <source>
        <dbReference type="UniProtKB" id="P39905"/>
    </source>
</evidence>
<evidence type="ECO:0000250" key="2">
    <source>
        <dbReference type="UniProtKB" id="P43028"/>
    </source>
</evidence>
<evidence type="ECO:0000250" key="3">
    <source>
        <dbReference type="UniProtKB" id="Q6KF10"/>
    </source>
</evidence>
<evidence type="ECO:0000255" key="4"/>
<evidence type="ECO:0000256" key="5">
    <source>
        <dbReference type="SAM" id="MobiDB-lite"/>
    </source>
</evidence>
<evidence type="ECO:0000305" key="6"/>
<accession>Q6HA10</accession>
<accession>Q8K4X4</accession>
<feature type="signal peptide" evidence="4">
    <location>
        <begin position="1"/>
        <end position="22"/>
    </location>
</feature>
<feature type="propeptide" id="PRO_0000342208" evidence="4">
    <location>
        <begin position="23"/>
        <end position="332"/>
    </location>
</feature>
<feature type="chain" id="PRO_0000042254" description="Growth/differentiation factor 6">
    <location>
        <begin position="333"/>
        <end position="452"/>
    </location>
</feature>
<feature type="region of interest" description="Disordered" evidence="5">
    <location>
        <begin position="29"/>
        <end position="93"/>
    </location>
</feature>
<feature type="region of interest" description="Disordered" evidence="5">
    <location>
        <begin position="244"/>
        <end position="267"/>
    </location>
</feature>
<feature type="region of interest" description="Disordered" evidence="5">
    <location>
        <begin position="301"/>
        <end position="348"/>
    </location>
</feature>
<feature type="compositionally biased region" description="Basic and acidic residues" evidence="5">
    <location>
        <begin position="37"/>
        <end position="46"/>
    </location>
</feature>
<feature type="compositionally biased region" description="Basic and acidic residues" evidence="5">
    <location>
        <begin position="58"/>
        <end position="75"/>
    </location>
</feature>
<feature type="compositionally biased region" description="Low complexity" evidence="5">
    <location>
        <begin position="301"/>
        <end position="317"/>
    </location>
</feature>
<feature type="compositionally biased region" description="Basic residues" evidence="5">
    <location>
        <begin position="327"/>
        <end position="348"/>
    </location>
</feature>
<feature type="glycosylation site" description="N-linked (GlcNAc...) asparagine" evidence="4">
    <location>
        <position position="115"/>
    </location>
</feature>
<feature type="disulfide bond" evidence="1">
    <location>
        <begin position="351"/>
        <end position="417"/>
    </location>
</feature>
<feature type="disulfide bond" evidence="1">
    <location>
        <begin position="380"/>
        <end position="449"/>
    </location>
</feature>
<feature type="disulfide bond" evidence="1">
    <location>
        <begin position="384"/>
        <end position="451"/>
    </location>
</feature>
<feature type="disulfide bond" description="Interchain" evidence="1">
    <location>
        <position position="416"/>
    </location>
</feature>
<keyword id="KW-0053">Apoptosis</keyword>
<keyword id="KW-0165">Cleavage on pair of basic residues</keyword>
<keyword id="KW-0202">Cytokine</keyword>
<keyword id="KW-0217">Developmental protein</keyword>
<keyword id="KW-1015">Disulfide bond</keyword>
<keyword id="KW-0325">Glycoprotein</keyword>
<keyword id="KW-0339">Growth factor</keyword>
<keyword id="KW-1185">Reference proteome</keyword>
<keyword id="KW-0964">Secreted</keyword>
<keyword id="KW-0732">Signal</keyword>
<protein>
    <recommendedName>
        <fullName>Growth/differentiation factor 6</fullName>
        <shortName>GDF-6</shortName>
    </recommendedName>
    <alternativeName>
        <fullName>Bone morphogenetic protein 13</fullName>
        <shortName>BMP-13</shortName>
    </alternativeName>
    <alternativeName>
        <fullName>Growth/differentiation factor 16</fullName>
    </alternativeName>
</protein>
<proteinExistence type="evidence at transcript level"/>
<name>GDF6_RAT</name>